<dbReference type="EMBL" id="BA000031">
    <property type="protein sequence ID" value="BAC58981.1"/>
    <property type="molecule type" value="Genomic_DNA"/>
</dbReference>
<dbReference type="RefSeq" id="NP_797097.1">
    <property type="nucleotide sequence ID" value="NC_004603.1"/>
</dbReference>
<dbReference type="SMR" id="Q87RQ9"/>
<dbReference type="GeneID" id="1188193"/>
<dbReference type="KEGG" id="vpa:VP0718"/>
<dbReference type="PATRIC" id="fig|223926.6.peg.687"/>
<dbReference type="eggNOG" id="COG2921">
    <property type="taxonomic scope" value="Bacteria"/>
</dbReference>
<dbReference type="HOGENOM" id="CLU_161438_2_1_6"/>
<dbReference type="Proteomes" id="UP000002493">
    <property type="component" value="Chromosome 1"/>
</dbReference>
<dbReference type="GO" id="GO:0005829">
    <property type="term" value="C:cytosol"/>
    <property type="evidence" value="ECO:0007669"/>
    <property type="project" value="TreeGrafter"/>
</dbReference>
<dbReference type="FunFam" id="3.30.70.260:FF:000002">
    <property type="entry name" value="UPF0250 protein YbeD"/>
    <property type="match status" value="1"/>
</dbReference>
<dbReference type="Gene3D" id="3.30.70.260">
    <property type="match status" value="1"/>
</dbReference>
<dbReference type="HAMAP" id="MF_00659">
    <property type="entry name" value="UPF0250"/>
    <property type="match status" value="1"/>
</dbReference>
<dbReference type="InterPro" id="IPR007454">
    <property type="entry name" value="UPF0250_YbeD-like"/>
</dbReference>
<dbReference type="InterPro" id="IPR027471">
    <property type="entry name" value="YbeD-like_sf"/>
</dbReference>
<dbReference type="NCBIfam" id="NF003447">
    <property type="entry name" value="PRK04998.1"/>
    <property type="match status" value="1"/>
</dbReference>
<dbReference type="PANTHER" id="PTHR38036">
    <property type="entry name" value="UPF0250 PROTEIN YBED"/>
    <property type="match status" value="1"/>
</dbReference>
<dbReference type="PANTHER" id="PTHR38036:SF1">
    <property type="entry name" value="UPF0250 PROTEIN YBED"/>
    <property type="match status" value="1"/>
</dbReference>
<dbReference type="Pfam" id="PF04359">
    <property type="entry name" value="DUF493"/>
    <property type="match status" value="1"/>
</dbReference>
<dbReference type="SUPFAM" id="SSF117991">
    <property type="entry name" value="YbeD/HP0495-like"/>
    <property type="match status" value="1"/>
</dbReference>
<reference key="1">
    <citation type="journal article" date="2003" name="Lancet">
        <title>Genome sequence of Vibrio parahaemolyticus: a pathogenic mechanism distinct from that of V. cholerae.</title>
        <authorList>
            <person name="Makino K."/>
            <person name="Oshima K."/>
            <person name="Kurokawa K."/>
            <person name="Yokoyama K."/>
            <person name="Uda T."/>
            <person name="Tagomori K."/>
            <person name="Iijima Y."/>
            <person name="Najima M."/>
            <person name="Nakano M."/>
            <person name="Yamashita A."/>
            <person name="Kubota Y."/>
            <person name="Kimura S."/>
            <person name="Yasunaga T."/>
            <person name="Honda T."/>
            <person name="Shinagawa H."/>
            <person name="Hattori M."/>
            <person name="Iida T."/>
        </authorList>
    </citation>
    <scope>NUCLEOTIDE SEQUENCE [LARGE SCALE GENOMIC DNA]</scope>
    <source>
        <strain>RIMD 2210633</strain>
    </source>
</reference>
<organism>
    <name type="scientific">Vibrio parahaemolyticus serotype O3:K6 (strain RIMD 2210633)</name>
    <dbReference type="NCBI Taxonomy" id="223926"/>
    <lineage>
        <taxon>Bacteria</taxon>
        <taxon>Pseudomonadati</taxon>
        <taxon>Pseudomonadota</taxon>
        <taxon>Gammaproteobacteria</taxon>
        <taxon>Vibrionales</taxon>
        <taxon>Vibrionaceae</taxon>
        <taxon>Vibrio</taxon>
    </lineage>
</organism>
<protein>
    <recommendedName>
        <fullName evidence="1">UPF0250 protein VP0718</fullName>
    </recommendedName>
</protein>
<comment type="similarity">
    <text evidence="1">Belongs to the UPF0250 family.</text>
</comment>
<accession>Q87RQ9</accession>
<feature type="chain" id="PRO_0000209315" description="UPF0250 protein VP0718">
    <location>
        <begin position="1"/>
        <end position="92"/>
    </location>
</feature>
<proteinExistence type="inferred from homology"/>
<name>Y718_VIBPA</name>
<sequence length="92" mass="10301">MLTINSDAKLKDLLEFPCSFTYKVMGHAKPELPELVLEVIQRHAPGDYSPKVKPSAKGNYHSVSINITATSIEQVETLYKELGEIDIVRMVL</sequence>
<evidence type="ECO:0000255" key="1">
    <source>
        <dbReference type="HAMAP-Rule" id="MF_00659"/>
    </source>
</evidence>
<gene>
    <name type="ordered locus">VP0718</name>
</gene>